<keyword id="KW-0002">3D-structure</keyword>
<keyword id="KW-0143">Chaperone</keyword>
<keyword id="KW-0963">Cytoplasm</keyword>
<keyword id="KW-0843">Virulence</keyword>
<feature type="chain" id="PRO_0000216363" description="Tir chaperone">
    <location>
        <begin position="1"/>
        <end position="156"/>
    </location>
</feature>
<feature type="sequence variant" description="In strain: RDEC-1, 83/39, 413/89-1 and CK379.">
    <original>Y</original>
    <variation>H</variation>
    <location>
        <position position="151"/>
    </location>
</feature>
<feature type="helix" evidence="3">
    <location>
        <begin position="4"/>
        <end position="16"/>
    </location>
</feature>
<feature type="strand" evidence="3">
    <location>
        <begin position="27"/>
        <end position="33"/>
    </location>
</feature>
<feature type="turn" evidence="3">
    <location>
        <begin position="34"/>
        <end position="36"/>
    </location>
</feature>
<feature type="strand" evidence="3">
    <location>
        <begin position="37"/>
        <end position="42"/>
    </location>
</feature>
<feature type="strand" evidence="3">
    <location>
        <begin position="46"/>
        <end position="57"/>
    </location>
</feature>
<feature type="helix" evidence="3">
    <location>
        <begin position="63"/>
        <end position="78"/>
    </location>
</feature>
<feature type="strand" evidence="3">
    <location>
        <begin position="83"/>
        <end position="87"/>
    </location>
</feature>
<feature type="turn" evidence="3">
    <location>
        <begin position="88"/>
        <end position="91"/>
    </location>
</feature>
<feature type="strand" evidence="3">
    <location>
        <begin position="92"/>
        <end position="100"/>
    </location>
</feature>
<feature type="helix" evidence="3">
    <location>
        <begin position="106"/>
        <end position="129"/>
    </location>
</feature>
<feature type="helix" evidence="3">
    <location>
        <begin position="148"/>
        <end position="151"/>
    </location>
</feature>
<reference key="1">
    <citation type="submission" date="1996-05" db="EMBL/GenBank/DDBJ databases">
        <authorList>
            <person name="Krejany E.O."/>
        </authorList>
    </citation>
    <scope>NUCLEOTIDE SEQUENCE [GENOMIC DNA]</scope>
    <source>
        <strain>84/110/1</strain>
        <strain>RDEC-1</strain>
    </source>
</reference>
<reference key="2">
    <citation type="submission" date="1996-12" db="EMBL/GenBank/DDBJ databases">
        <authorList>
            <person name="O'Brien R.A."/>
        </authorList>
    </citation>
    <scope>NUCLEOTIDE SEQUENCE [GENOMIC DNA]</scope>
    <source>
        <strain>O15:H- / 83/39 / ETEC</strain>
    </source>
</reference>
<reference key="3">
    <citation type="submission" date="1997-12" db="EMBL/GenBank/DDBJ databases">
        <authorList>
            <person name="Deibel C."/>
            <person name="Kraemer S."/>
            <person name="Chakraborty T."/>
            <person name="Ebel F."/>
        </authorList>
    </citation>
    <scope>NUCLEOTIDE SEQUENCE [GENOMIC DNA]</scope>
    <source>
        <strain>O26:H- / 413/89-1 / EHEC</strain>
    </source>
</reference>
<reference key="4">
    <citation type="journal article" date="1996" name="FEMS Microbiol. Lett.">
        <title>Characterization of the eaeA gene from rabbit enteropathogenic Escherichia coli strain RDEC-1 and comparison to other eaeA genes from bacteria that cause attaching-effacing lesions.</title>
        <authorList>
            <person name="Agin T.S."/>
            <person name="Cantey J.R."/>
            <person name="Boedeker E.C."/>
            <person name="Wolf M.K."/>
        </authorList>
    </citation>
    <scope>NUCLEOTIDE SEQUENCE [GENOMIC DNA]</scope>
    <source>
        <strain>RDEC-1</strain>
    </source>
</reference>
<reference key="5">
    <citation type="journal article" date="2001" name="Infect. Immun.">
        <title>Complete nucleotide sequence and analysis of the locus of enterocyte effacement from rabbit diarrheagenic Escherichia coli RDEC-1.</title>
        <authorList>
            <person name="Zhu C."/>
            <person name="Agin T.S."/>
            <person name="Elliott S.J."/>
            <person name="Johnson L.A."/>
            <person name="Thate T.E."/>
            <person name="Kaper J.B."/>
            <person name="Boedeker E.C."/>
        </authorList>
    </citation>
    <scope>NUCLEOTIDE SEQUENCE [GENOMIC DNA]</scope>
    <source>
        <strain>RDEC-1</strain>
    </source>
</reference>
<reference key="6">
    <citation type="journal article" date="2000" name="Infect. Immun.">
        <title>Role of tir and intimin in the virulence of rabbit enteropathogenic Escherichia coli serotype O103:H2.</title>
        <authorList>
            <person name="Marches O."/>
            <person name="Nougayrede J.-P."/>
            <person name="Boullier S."/>
            <person name="Mainil J."/>
            <person name="Charlier G."/>
            <person name="Raymond I."/>
            <person name="Pohl P."/>
            <person name="Boury M."/>
            <person name="De Rycke J."/>
            <person name="Milon A."/>
            <person name="Oswald E."/>
        </authorList>
    </citation>
    <scope>NUCLEOTIDE SEQUENCE [GENOMIC DNA]</scope>
    <source>
        <strain>O103:H2 / B10 / EPEC</strain>
    </source>
</reference>
<reference key="7">
    <citation type="submission" date="2000-04" db="EMBL/GenBank/DDBJ databases">
        <title>Association between intimin (eae) and EspB (espB) gene subtypes in Attaching and effacing Escherichia coli strains isolated from diarrheic lambs and goat kids.</title>
        <authorList>
            <person name="Cid D."/>
        </authorList>
    </citation>
    <scope>NUCLEOTIDE SEQUENCE [GENOMIC DNA]</scope>
    <source>
        <strain>CK379</strain>
    </source>
</reference>
<sequence>MSSRSELLLDRFAEKIGIGSISFNENRLCSFAIDEIYYISLSDANDEYMMIYGVCGKFPTDNPNFALEILNANLWFAENGGPYLCYESGAQSLLLALRFPLDDATPEKLENEIEVVVKSMENLYLVLHNQGITLENEHMKIEEISSSDNKYYYAGR</sequence>
<evidence type="ECO:0000250" key="1"/>
<evidence type="ECO:0000305" key="2"/>
<evidence type="ECO:0007829" key="3">
    <source>
        <dbReference type="PDB" id="5Z38"/>
    </source>
</evidence>
<protein>
    <recommendedName>
        <fullName>Tir chaperone</fullName>
    </recommendedName>
</protein>
<gene>
    <name type="primary">cesT</name>
</gene>
<comment type="function">
    <text evidence="1">Chaperone for the type III secretion of Tir. Probably stabilizes the protein, prevents inappropriate protein-protein interactions and aids in secretion (By similarity).</text>
</comment>
<comment type="subcellular location">
    <subcellularLocation>
        <location evidence="1">Cytoplasm</location>
    </subcellularLocation>
</comment>
<comment type="similarity">
    <text evidence="2">Belongs to the CesT/SycH chaperone family.</text>
</comment>
<dbReference type="EMBL" id="U59502">
    <property type="protein sequence ID" value="AAC32029.1"/>
    <property type="molecule type" value="Genomic_DNA"/>
</dbReference>
<dbReference type="EMBL" id="U59503">
    <property type="protein sequence ID" value="AAB02942.1"/>
    <property type="molecule type" value="Genomic_DNA"/>
</dbReference>
<dbReference type="EMBL" id="U59504">
    <property type="protein sequence ID" value="AAB39867.1"/>
    <property type="molecule type" value="Genomic_DNA"/>
</dbReference>
<dbReference type="EMBL" id="U60002">
    <property type="protein sequence ID" value="AAB36673.1"/>
    <property type="molecule type" value="Genomic_DNA"/>
</dbReference>
<dbReference type="EMBL" id="AJ223063">
    <property type="protein sequence ID" value="CAA11066.1"/>
    <property type="molecule type" value="Genomic_DNA"/>
</dbReference>
<dbReference type="EMBL" id="AF200363">
    <property type="protein sequence ID" value="AAK26723.1"/>
    <property type="molecule type" value="Genomic_DNA"/>
</dbReference>
<dbReference type="EMBL" id="AF113597">
    <property type="protein sequence ID" value="AAF03081.1"/>
    <property type="molecule type" value="Genomic_DNA"/>
</dbReference>
<dbReference type="EMBL" id="AF253560">
    <property type="protein sequence ID" value="AAK48431.1"/>
    <property type="molecule type" value="Genomic_DNA"/>
</dbReference>
<dbReference type="PDB" id="5Z38">
    <property type="method" value="X-ray"/>
    <property type="resolution" value="2.29 A"/>
    <property type="chains" value="A/B/C/D=1-156"/>
</dbReference>
<dbReference type="PDBsum" id="5Z38"/>
<dbReference type="BMRB" id="Q47015"/>
<dbReference type="SMR" id="Q47015"/>
<dbReference type="DIP" id="DIP-27658N"/>
<dbReference type="GO" id="GO:0005737">
    <property type="term" value="C:cytoplasm"/>
    <property type="evidence" value="ECO:0007669"/>
    <property type="project" value="UniProtKB-SubCell"/>
</dbReference>
<dbReference type="GO" id="GO:0030254">
    <property type="term" value="P:protein secretion by the type III secretion system"/>
    <property type="evidence" value="ECO:0007669"/>
    <property type="project" value="InterPro"/>
</dbReference>
<dbReference type="CDD" id="cd17023">
    <property type="entry name" value="T3SC_IA_CesT-like"/>
    <property type="match status" value="1"/>
</dbReference>
<dbReference type="Gene3D" id="1.10.287.390">
    <property type="match status" value="1"/>
</dbReference>
<dbReference type="Gene3D" id="3.30.1460.10">
    <property type="match status" value="1"/>
</dbReference>
<dbReference type="InterPro" id="IPR010261">
    <property type="entry name" value="Tir_chaperone"/>
</dbReference>
<dbReference type="Pfam" id="PF05932">
    <property type="entry name" value="CesT"/>
    <property type="match status" value="1"/>
</dbReference>
<dbReference type="SUPFAM" id="SSF69635">
    <property type="entry name" value="Type III secretory system chaperone-like"/>
    <property type="match status" value="1"/>
</dbReference>
<name>CEST_ECOLX</name>
<proteinExistence type="evidence at protein level"/>
<organism>
    <name type="scientific">Escherichia coli</name>
    <dbReference type="NCBI Taxonomy" id="562"/>
    <lineage>
        <taxon>Bacteria</taxon>
        <taxon>Pseudomonadati</taxon>
        <taxon>Pseudomonadota</taxon>
        <taxon>Gammaproteobacteria</taxon>
        <taxon>Enterobacterales</taxon>
        <taxon>Enterobacteriaceae</taxon>
        <taxon>Escherichia</taxon>
    </lineage>
</organism>
<accession>Q47015</accession>
<accession>Q47017</accession>